<proteinExistence type="inferred from homology"/>
<accession>Q2RL16</accession>
<reference key="1">
    <citation type="journal article" date="2008" name="Environ. Microbiol.">
        <title>The complete genome sequence of Moorella thermoacetica (f. Clostridium thermoaceticum).</title>
        <authorList>
            <person name="Pierce E."/>
            <person name="Xie G."/>
            <person name="Barabote R.D."/>
            <person name="Saunders E."/>
            <person name="Han C.S."/>
            <person name="Detter J.C."/>
            <person name="Richardson P."/>
            <person name="Brettin T.S."/>
            <person name="Das A."/>
            <person name="Ljungdahl L.G."/>
            <person name="Ragsdale S.W."/>
        </authorList>
    </citation>
    <scope>NUCLEOTIDE SEQUENCE [LARGE SCALE GENOMIC DNA]</scope>
    <source>
        <strain>ATCC 39073 / JCM 9320</strain>
    </source>
</reference>
<sequence length="98" mass="11086">MLEFLLRFFGRDTASSKKVAKERLRLVLVHDRAGVSPHLLESLKNDLIKVISEYLDIDTDGLEVSLTHENDAVALVANIPILRVKRTFKSVQEPAFKV</sequence>
<feature type="chain" id="PRO_0000298136" description="Cell division topological specificity factor">
    <location>
        <begin position="1"/>
        <end position="98"/>
    </location>
</feature>
<dbReference type="EMBL" id="CP000232">
    <property type="protein sequence ID" value="ABC18873.1"/>
    <property type="molecule type" value="Genomic_DNA"/>
</dbReference>
<dbReference type="RefSeq" id="YP_429416.1">
    <property type="nucleotide sequence ID" value="NC_007644.1"/>
</dbReference>
<dbReference type="SMR" id="Q2RL16"/>
<dbReference type="STRING" id="264732.Moth_0543"/>
<dbReference type="EnsemblBacteria" id="ABC18873">
    <property type="protein sequence ID" value="ABC18873"/>
    <property type="gene ID" value="Moth_0543"/>
</dbReference>
<dbReference type="KEGG" id="mta:Moth_0543"/>
<dbReference type="PATRIC" id="fig|264732.11.peg.585"/>
<dbReference type="eggNOG" id="COG0851">
    <property type="taxonomic scope" value="Bacteria"/>
</dbReference>
<dbReference type="HOGENOM" id="CLU_137929_1_1_9"/>
<dbReference type="OrthoDB" id="9796578at2"/>
<dbReference type="GO" id="GO:0051301">
    <property type="term" value="P:cell division"/>
    <property type="evidence" value="ECO:0007669"/>
    <property type="project" value="UniProtKB-KW"/>
</dbReference>
<dbReference type="GO" id="GO:0032955">
    <property type="term" value="P:regulation of division septum assembly"/>
    <property type="evidence" value="ECO:0007669"/>
    <property type="project" value="InterPro"/>
</dbReference>
<dbReference type="Gene3D" id="3.30.1070.10">
    <property type="entry name" value="Cell division topological specificity factor MinE"/>
    <property type="match status" value="1"/>
</dbReference>
<dbReference type="HAMAP" id="MF_00262">
    <property type="entry name" value="MinE"/>
    <property type="match status" value="1"/>
</dbReference>
<dbReference type="InterPro" id="IPR005527">
    <property type="entry name" value="MinE"/>
</dbReference>
<dbReference type="InterPro" id="IPR036707">
    <property type="entry name" value="MinE_sf"/>
</dbReference>
<dbReference type="NCBIfam" id="TIGR01215">
    <property type="entry name" value="minE"/>
    <property type="match status" value="1"/>
</dbReference>
<dbReference type="Pfam" id="PF03776">
    <property type="entry name" value="MinE"/>
    <property type="match status" value="1"/>
</dbReference>
<dbReference type="SUPFAM" id="SSF55229">
    <property type="entry name" value="Cell division protein MinE topological specificity domain"/>
    <property type="match status" value="1"/>
</dbReference>
<keyword id="KW-0131">Cell cycle</keyword>
<keyword id="KW-0132">Cell division</keyword>
<name>MINE_MOOTA</name>
<evidence type="ECO:0000255" key="1">
    <source>
        <dbReference type="HAMAP-Rule" id="MF_00262"/>
    </source>
</evidence>
<protein>
    <recommendedName>
        <fullName evidence="1">Cell division topological specificity factor</fullName>
    </recommendedName>
</protein>
<organism>
    <name type="scientific">Moorella thermoacetica (strain ATCC 39073 / JCM 9320)</name>
    <dbReference type="NCBI Taxonomy" id="264732"/>
    <lineage>
        <taxon>Bacteria</taxon>
        <taxon>Bacillati</taxon>
        <taxon>Bacillota</taxon>
        <taxon>Clostridia</taxon>
        <taxon>Moorellales</taxon>
        <taxon>Moorellaceae</taxon>
        <taxon>Moorella</taxon>
    </lineage>
</organism>
<comment type="function">
    <text evidence="1">Prevents the cell division inhibition by proteins MinC and MinD at internal division sites while permitting inhibition at polar sites. This ensures cell division at the proper site by restricting the formation of a division septum at the midpoint of the long axis of the cell.</text>
</comment>
<comment type="similarity">
    <text evidence="1">Belongs to the MinE family.</text>
</comment>
<gene>
    <name evidence="1" type="primary">minE</name>
    <name type="ordered locus">Moth_0543</name>
</gene>